<proteinExistence type="inferred from homology"/>
<feature type="chain" id="PRO_1000085219" description="Chaperone protein DnaJ">
    <location>
        <begin position="1"/>
        <end position="371"/>
    </location>
</feature>
<feature type="domain" description="J" evidence="1">
    <location>
        <begin position="5"/>
        <end position="70"/>
    </location>
</feature>
<feature type="repeat" description="CXXCXGXG motif">
    <location>
        <begin position="152"/>
        <end position="159"/>
    </location>
</feature>
<feature type="repeat" description="CXXCXGXG motif">
    <location>
        <begin position="169"/>
        <end position="176"/>
    </location>
</feature>
<feature type="repeat" description="CXXCXGXG motif">
    <location>
        <begin position="191"/>
        <end position="198"/>
    </location>
</feature>
<feature type="repeat" description="CXXCXGXG motif">
    <location>
        <begin position="205"/>
        <end position="212"/>
    </location>
</feature>
<feature type="zinc finger region" description="CR-type" evidence="1">
    <location>
        <begin position="139"/>
        <end position="217"/>
    </location>
</feature>
<feature type="binding site" evidence="1">
    <location>
        <position position="152"/>
    </location>
    <ligand>
        <name>Zn(2+)</name>
        <dbReference type="ChEBI" id="CHEBI:29105"/>
        <label>1</label>
    </ligand>
</feature>
<feature type="binding site" evidence="1">
    <location>
        <position position="155"/>
    </location>
    <ligand>
        <name>Zn(2+)</name>
        <dbReference type="ChEBI" id="CHEBI:29105"/>
        <label>1</label>
    </ligand>
</feature>
<feature type="binding site" evidence="1">
    <location>
        <position position="169"/>
    </location>
    <ligand>
        <name>Zn(2+)</name>
        <dbReference type="ChEBI" id="CHEBI:29105"/>
        <label>2</label>
    </ligand>
</feature>
<feature type="binding site" evidence="1">
    <location>
        <position position="172"/>
    </location>
    <ligand>
        <name>Zn(2+)</name>
        <dbReference type="ChEBI" id="CHEBI:29105"/>
        <label>2</label>
    </ligand>
</feature>
<feature type="binding site" evidence="1">
    <location>
        <position position="191"/>
    </location>
    <ligand>
        <name>Zn(2+)</name>
        <dbReference type="ChEBI" id="CHEBI:29105"/>
        <label>2</label>
    </ligand>
</feature>
<feature type="binding site" evidence="1">
    <location>
        <position position="194"/>
    </location>
    <ligand>
        <name>Zn(2+)</name>
        <dbReference type="ChEBI" id="CHEBI:29105"/>
        <label>2</label>
    </ligand>
</feature>
<feature type="binding site" evidence="1">
    <location>
        <position position="205"/>
    </location>
    <ligand>
        <name>Zn(2+)</name>
        <dbReference type="ChEBI" id="CHEBI:29105"/>
        <label>1</label>
    </ligand>
</feature>
<feature type="binding site" evidence="1">
    <location>
        <position position="208"/>
    </location>
    <ligand>
        <name>Zn(2+)</name>
        <dbReference type="ChEBI" id="CHEBI:29105"/>
        <label>1</label>
    </ligand>
</feature>
<comment type="function">
    <text evidence="1">Participates actively in the response to hyperosmotic and heat shock by preventing the aggregation of stress-denatured proteins and by disaggregating proteins, also in an autonomous, DnaK-independent fashion. Unfolded proteins bind initially to DnaJ; upon interaction with the DnaJ-bound protein, DnaK hydrolyzes its bound ATP, resulting in the formation of a stable complex. GrpE releases ADP from DnaK; ATP binding to DnaK triggers the release of the substrate protein, thus completing the reaction cycle. Several rounds of ATP-dependent interactions between DnaJ, DnaK and GrpE are required for fully efficient folding. Also involved, together with DnaK and GrpE, in the DNA replication of plasmids through activation of initiation proteins.</text>
</comment>
<comment type="cofactor">
    <cofactor evidence="1">
        <name>Zn(2+)</name>
        <dbReference type="ChEBI" id="CHEBI:29105"/>
    </cofactor>
    <text evidence="1">Binds 2 Zn(2+) ions per monomer.</text>
</comment>
<comment type="subunit">
    <text evidence="1">Homodimer.</text>
</comment>
<comment type="subcellular location">
    <subcellularLocation>
        <location evidence="1">Cytoplasm</location>
    </subcellularLocation>
</comment>
<comment type="domain">
    <text evidence="1">The J domain is necessary and sufficient to stimulate DnaK ATPase activity. Zinc center 1 plays an important role in the autonomous, DnaK-independent chaperone activity of DnaJ. Zinc center 2 is essential for interaction with DnaK and for DnaJ activity.</text>
</comment>
<comment type="similarity">
    <text evidence="1">Belongs to the DnaJ family.</text>
</comment>
<name>DNAJ_LEPBJ</name>
<dbReference type="EMBL" id="CP000350">
    <property type="protein sequence ID" value="ABJ75143.1"/>
    <property type="molecule type" value="Genomic_DNA"/>
</dbReference>
<dbReference type="RefSeq" id="WP_011670943.1">
    <property type="nucleotide sequence ID" value="NC_008510.1"/>
</dbReference>
<dbReference type="SMR" id="Q04VC7"/>
<dbReference type="KEGG" id="lbj:LBJ_0434"/>
<dbReference type="HOGENOM" id="CLU_017633_0_7_12"/>
<dbReference type="Proteomes" id="UP000000656">
    <property type="component" value="Chromosome 1"/>
</dbReference>
<dbReference type="GO" id="GO:0005737">
    <property type="term" value="C:cytoplasm"/>
    <property type="evidence" value="ECO:0007669"/>
    <property type="project" value="UniProtKB-SubCell"/>
</dbReference>
<dbReference type="GO" id="GO:0005524">
    <property type="term" value="F:ATP binding"/>
    <property type="evidence" value="ECO:0007669"/>
    <property type="project" value="InterPro"/>
</dbReference>
<dbReference type="GO" id="GO:0031072">
    <property type="term" value="F:heat shock protein binding"/>
    <property type="evidence" value="ECO:0007669"/>
    <property type="project" value="InterPro"/>
</dbReference>
<dbReference type="GO" id="GO:0051082">
    <property type="term" value="F:unfolded protein binding"/>
    <property type="evidence" value="ECO:0007669"/>
    <property type="project" value="UniProtKB-UniRule"/>
</dbReference>
<dbReference type="GO" id="GO:0008270">
    <property type="term" value="F:zinc ion binding"/>
    <property type="evidence" value="ECO:0007669"/>
    <property type="project" value="UniProtKB-UniRule"/>
</dbReference>
<dbReference type="GO" id="GO:0051085">
    <property type="term" value="P:chaperone cofactor-dependent protein refolding"/>
    <property type="evidence" value="ECO:0007669"/>
    <property type="project" value="TreeGrafter"/>
</dbReference>
<dbReference type="GO" id="GO:0006260">
    <property type="term" value="P:DNA replication"/>
    <property type="evidence" value="ECO:0007669"/>
    <property type="project" value="UniProtKB-KW"/>
</dbReference>
<dbReference type="GO" id="GO:0042026">
    <property type="term" value="P:protein refolding"/>
    <property type="evidence" value="ECO:0007669"/>
    <property type="project" value="TreeGrafter"/>
</dbReference>
<dbReference type="GO" id="GO:0009408">
    <property type="term" value="P:response to heat"/>
    <property type="evidence" value="ECO:0007669"/>
    <property type="project" value="InterPro"/>
</dbReference>
<dbReference type="CDD" id="cd06257">
    <property type="entry name" value="DnaJ"/>
    <property type="match status" value="1"/>
</dbReference>
<dbReference type="CDD" id="cd10747">
    <property type="entry name" value="DnaJ_C"/>
    <property type="match status" value="1"/>
</dbReference>
<dbReference type="CDD" id="cd10719">
    <property type="entry name" value="DnaJ_zf"/>
    <property type="match status" value="1"/>
</dbReference>
<dbReference type="FunFam" id="1.10.287.110:FF:000034">
    <property type="entry name" value="Chaperone protein DnaJ"/>
    <property type="match status" value="1"/>
</dbReference>
<dbReference type="FunFam" id="2.60.260.20:FF:000005">
    <property type="entry name" value="Chaperone protein dnaJ 1, mitochondrial"/>
    <property type="match status" value="1"/>
</dbReference>
<dbReference type="FunFam" id="2.10.230.10:FF:000002">
    <property type="entry name" value="Molecular chaperone DnaJ"/>
    <property type="match status" value="1"/>
</dbReference>
<dbReference type="Gene3D" id="1.10.287.110">
    <property type="entry name" value="DnaJ domain"/>
    <property type="match status" value="1"/>
</dbReference>
<dbReference type="Gene3D" id="2.10.230.10">
    <property type="entry name" value="Heat shock protein DnaJ, cysteine-rich domain"/>
    <property type="match status" value="1"/>
</dbReference>
<dbReference type="Gene3D" id="2.60.260.20">
    <property type="entry name" value="Urease metallochaperone UreE, N-terminal domain"/>
    <property type="match status" value="2"/>
</dbReference>
<dbReference type="HAMAP" id="MF_01152">
    <property type="entry name" value="DnaJ"/>
    <property type="match status" value="1"/>
</dbReference>
<dbReference type="InterPro" id="IPR012724">
    <property type="entry name" value="DnaJ"/>
</dbReference>
<dbReference type="InterPro" id="IPR002939">
    <property type="entry name" value="DnaJ_C"/>
</dbReference>
<dbReference type="InterPro" id="IPR001623">
    <property type="entry name" value="DnaJ_domain"/>
</dbReference>
<dbReference type="InterPro" id="IPR018253">
    <property type="entry name" value="DnaJ_domain_CS"/>
</dbReference>
<dbReference type="InterPro" id="IPR008971">
    <property type="entry name" value="HSP40/DnaJ_pept-bd"/>
</dbReference>
<dbReference type="InterPro" id="IPR001305">
    <property type="entry name" value="HSP_DnaJ_Cys-rich_dom"/>
</dbReference>
<dbReference type="InterPro" id="IPR036410">
    <property type="entry name" value="HSP_DnaJ_Cys-rich_dom_sf"/>
</dbReference>
<dbReference type="InterPro" id="IPR036869">
    <property type="entry name" value="J_dom_sf"/>
</dbReference>
<dbReference type="NCBIfam" id="TIGR02349">
    <property type="entry name" value="DnaJ_bact"/>
    <property type="match status" value="1"/>
</dbReference>
<dbReference type="NCBIfam" id="NF008035">
    <property type="entry name" value="PRK10767.1"/>
    <property type="match status" value="1"/>
</dbReference>
<dbReference type="NCBIfam" id="NF010879">
    <property type="entry name" value="PRK14286.1"/>
    <property type="match status" value="1"/>
</dbReference>
<dbReference type="PANTHER" id="PTHR43096:SF48">
    <property type="entry name" value="CHAPERONE PROTEIN DNAJ"/>
    <property type="match status" value="1"/>
</dbReference>
<dbReference type="PANTHER" id="PTHR43096">
    <property type="entry name" value="DNAJ HOMOLOG 1, MITOCHONDRIAL-RELATED"/>
    <property type="match status" value="1"/>
</dbReference>
<dbReference type="Pfam" id="PF00226">
    <property type="entry name" value="DnaJ"/>
    <property type="match status" value="1"/>
</dbReference>
<dbReference type="Pfam" id="PF01556">
    <property type="entry name" value="DnaJ_C"/>
    <property type="match status" value="1"/>
</dbReference>
<dbReference type="Pfam" id="PF00684">
    <property type="entry name" value="DnaJ_CXXCXGXG"/>
    <property type="match status" value="1"/>
</dbReference>
<dbReference type="PRINTS" id="PR00625">
    <property type="entry name" value="JDOMAIN"/>
</dbReference>
<dbReference type="SMART" id="SM00271">
    <property type="entry name" value="DnaJ"/>
    <property type="match status" value="1"/>
</dbReference>
<dbReference type="SUPFAM" id="SSF46565">
    <property type="entry name" value="Chaperone J-domain"/>
    <property type="match status" value="1"/>
</dbReference>
<dbReference type="SUPFAM" id="SSF57938">
    <property type="entry name" value="DnaJ/Hsp40 cysteine-rich domain"/>
    <property type="match status" value="1"/>
</dbReference>
<dbReference type="SUPFAM" id="SSF49493">
    <property type="entry name" value="HSP40/DnaJ peptide-binding domain"/>
    <property type="match status" value="2"/>
</dbReference>
<dbReference type="PROSITE" id="PS00636">
    <property type="entry name" value="DNAJ_1"/>
    <property type="match status" value="1"/>
</dbReference>
<dbReference type="PROSITE" id="PS50076">
    <property type="entry name" value="DNAJ_2"/>
    <property type="match status" value="1"/>
</dbReference>
<dbReference type="PROSITE" id="PS51188">
    <property type="entry name" value="ZF_CR"/>
    <property type="match status" value="1"/>
</dbReference>
<reference key="1">
    <citation type="journal article" date="2006" name="Proc. Natl. Acad. Sci. U.S.A.">
        <title>Genome reduction in Leptospira borgpetersenii reflects limited transmission potential.</title>
        <authorList>
            <person name="Bulach D.M."/>
            <person name="Zuerner R.L."/>
            <person name="Wilson P."/>
            <person name="Seemann T."/>
            <person name="McGrath A."/>
            <person name="Cullen P.A."/>
            <person name="Davis J."/>
            <person name="Johnson M."/>
            <person name="Kuczek E."/>
            <person name="Alt D.P."/>
            <person name="Peterson-Burch B."/>
            <person name="Coppel R.L."/>
            <person name="Rood J.I."/>
            <person name="Davies J.K."/>
            <person name="Adler B."/>
        </authorList>
    </citation>
    <scope>NUCLEOTIDE SEQUENCE [LARGE SCALE GENOMIC DNA]</scope>
    <source>
        <strain>JB197</strain>
    </source>
</reference>
<keyword id="KW-0143">Chaperone</keyword>
<keyword id="KW-0963">Cytoplasm</keyword>
<keyword id="KW-0235">DNA replication</keyword>
<keyword id="KW-0479">Metal-binding</keyword>
<keyword id="KW-0677">Repeat</keyword>
<keyword id="KW-0346">Stress response</keyword>
<keyword id="KW-0862">Zinc</keyword>
<keyword id="KW-0863">Zinc-finger</keyword>
<accession>Q04VC7</accession>
<gene>
    <name evidence="1" type="primary">dnaJ</name>
    <name type="ordered locus">LBJ_0434</name>
</gene>
<evidence type="ECO:0000255" key="1">
    <source>
        <dbReference type="HAMAP-Rule" id="MF_01152"/>
    </source>
</evidence>
<organism>
    <name type="scientific">Leptospira borgpetersenii serovar Hardjo-bovis (strain JB197)</name>
    <dbReference type="NCBI Taxonomy" id="355277"/>
    <lineage>
        <taxon>Bacteria</taxon>
        <taxon>Pseudomonadati</taxon>
        <taxon>Spirochaetota</taxon>
        <taxon>Spirochaetia</taxon>
        <taxon>Leptospirales</taxon>
        <taxon>Leptospiraceae</taxon>
        <taxon>Leptospira</taxon>
    </lineage>
</organism>
<protein>
    <recommendedName>
        <fullName evidence="1">Chaperone protein DnaJ</fullName>
    </recommendedName>
</protein>
<sequence length="371" mass="40021">MSERSYYDILGVSKSANDEEIKSAYRKLAIKYHPDKNKGNKESEEKFKEATEAYEILRDPKKRQAYDQFGKAGVGAGAGGFGQGAYTDFSDIFGDFGDIFGDFFGGGRGGFGGGRRSGSQRGSDLRYNLEVSLEDAALGREYKIEIPRLESCGDCNGSGAAKGSSPTTCPDCGGSGQIRRTQGFFSVATTCPTCRGKGTTISNPCKTCGGQGLQEKRRTINIKIPPGVETGSRLKVSGEGEAGPNGGSHGDLYVVTHIKRHELFERQGNDLILVRKITLAQAILGAEIEVPTIDGKKAKMKIPEGTESGQVFRLKGHGMPYLGAYGKGDQHVVVKIEIPKKITRRQRELIEAFARESGENIPGSKGKIFTK</sequence>